<organism>
    <name type="scientific">Staphylococcus aureus (strain JH1)</name>
    <dbReference type="NCBI Taxonomy" id="359787"/>
    <lineage>
        <taxon>Bacteria</taxon>
        <taxon>Bacillati</taxon>
        <taxon>Bacillota</taxon>
        <taxon>Bacilli</taxon>
        <taxon>Bacillales</taxon>
        <taxon>Staphylococcaceae</taxon>
        <taxon>Staphylococcus</taxon>
    </lineage>
</organism>
<protein>
    <recommendedName>
        <fullName evidence="1">D-aminoacyl-tRNA deacylase</fullName>
        <shortName evidence="1">DTD</shortName>
        <ecNumber evidence="1">3.1.1.96</ecNumber>
    </recommendedName>
    <alternativeName>
        <fullName evidence="1">Gly-tRNA(Ala) deacylase</fullName>
    </alternativeName>
</protein>
<proteinExistence type="inferred from homology"/>
<sequence>MKVVVQRVKEASVTNDTLNNQIKKGYCLLVGIGQNSTEQDADVIAKKIANARLFEDDNNKLNFNIQQMNGEILSVSQFTLYADVKKGNRPGFSNSKNPDQAVKIYEYFNDALRAYGLTVKTGEFGTHMNVSINNDGPVTIIYESQDGKIQ</sequence>
<comment type="function">
    <text evidence="1">An aminoacyl-tRNA editing enzyme that deacylates mischarged D-aminoacyl-tRNAs. Also deacylates mischarged glycyl-tRNA(Ala), protecting cells against glycine mischarging by AlaRS. Acts via tRNA-based rather than protein-based catalysis; rejects L-amino acids rather than detecting D-amino acids in the active site. By recycling D-aminoacyl-tRNA to D-amino acids and free tRNA molecules, this enzyme counteracts the toxicity associated with the formation of D-aminoacyl-tRNA entities in vivo and helps enforce protein L-homochirality.</text>
</comment>
<comment type="catalytic activity">
    <reaction evidence="1">
        <text>glycyl-tRNA(Ala) + H2O = tRNA(Ala) + glycine + H(+)</text>
        <dbReference type="Rhea" id="RHEA:53744"/>
        <dbReference type="Rhea" id="RHEA-COMP:9657"/>
        <dbReference type="Rhea" id="RHEA-COMP:13640"/>
        <dbReference type="ChEBI" id="CHEBI:15377"/>
        <dbReference type="ChEBI" id="CHEBI:15378"/>
        <dbReference type="ChEBI" id="CHEBI:57305"/>
        <dbReference type="ChEBI" id="CHEBI:78442"/>
        <dbReference type="ChEBI" id="CHEBI:78522"/>
        <dbReference type="EC" id="3.1.1.96"/>
    </reaction>
</comment>
<comment type="catalytic activity">
    <reaction evidence="1">
        <text>a D-aminoacyl-tRNA + H2O = a tRNA + a D-alpha-amino acid + H(+)</text>
        <dbReference type="Rhea" id="RHEA:13953"/>
        <dbReference type="Rhea" id="RHEA-COMP:10123"/>
        <dbReference type="Rhea" id="RHEA-COMP:10124"/>
        <dbReference type="ChEBI" id="CHEBI:15377"/>
        <dbReference type="ChEBI" id="CHEBI:15378"/>
        <dbReference type="ChEBI" id="CHEBI:59871"/>
        <dbReference type="ChEBI" id="CHEBI:78442"/>
        <dbReference type="ChEBI" id="CHEBI:79333"/>
        <dbReference type="EC" id="3.1.1.96"/>
    </reaction>
</comment>
<comment type="subunit">
    <text evidence="1">Homodimer.</text>
</comment>
<comment type="subcellular location">
    <subcellularLocation>
        <location evidence="1">Cytoplasm</location>
    </subcellularLocation>
</comment>
<comment type="domain">
    <text evidence="1">A Gly-cisPro motif from one monomer fits into the active site of the other monomer to allow specific chiral rejection of L-amino acids.</text>
</comment>
<comment type="similarity">
    <text evidence="1">Belongs to the DTD family.</text>
</comment>
<dbReference type="EC" id="3.1.1.96" evidence="1"/>
<dbReference type="EMBL" id="CP000736">
    <property type="protein sequence ID" value="ABR52569.1"/>
    <property type="molecule type" value="Genomic_DNA"/>
</dbReference>
<dbReference type="SMR" id="A6U2A1"/>
<dbReference type="KEGG" id="sah:SaurJH1_1723"/>
<dbReference type="HOGENOM" id="CLU_076901_1_0_9"/>
<dbReference type="GO" id="GO:0005737">
    <property type="term" value="C:cytoplasm"/>
    <property type="evidence" value="ECO:0007669"/>
    <property type="project" value="UniProtKB-SubCell"/>
</dbReference>
<dbReference type="GO" id="GO:0051500">
    <property type="term" value="F:D-tyrosyl-tRNA(Tyr) deacylase activity"/>
    <property type="evidence" value="ECO:0007669"/>
    <property type="project" value="TreeGrafter"/>
</dbReference>
<dbReference type="GO" id="GO:0106026">
    <property type="term" value="F:Gly-tRNA(Ala) deacylase activity"/>
    <property type="evidence" value="ECO:0007669"/>
    <property type="project" value="UniProtKB-UniRule"/>
</dbReference>
<dbReference type="GO" id="GO:0043908">
    <property type="term" value="F:Ser(Gly)-tRNA(Ala) hydrolase activity"/>
    <property type="evidence" value="ECO:0007669"/>
    <property type="project" value="UniProtKB-UniRule"/>
</dbReference>
<dbReference type="GO" id="GO:0000049">
    <property type="term" value="F:tRNA binding"/>
    <property type="evidence" value="ECO:0007669"/>
    <property type="project" value="UniProtKB-UniRule"/>
</dbReference>
<dbReference type="GO" id="GO:0019478">
    <property type="term" value="P:D-amino acid catabolic process"/>
    <property type="evidence" value="ECO:0007669"/>
    <property type="project" value="UniProtKB-UniRule"/>
</dbReference>
<dbReference type="FunFam" id="3.50.80.10:FF:000005">
    <property type="entry name" value="D-aminoacyl-tRNA deacylase"/>
    <property type="match status" value="1"/>
</dbReference>
<dbReference type="Gene3D" id="3.50.80.10">
    <property type="entry name" value="D-tyrosyl-tRNA(Tyr) deacylase"/>
    <property type="match status" value="1"/>
</dbReference>
<dbReference type="HAMAP" id="MF_00518">
    <property type="entry name" value="Deacylase_Dtd"/>
    <property type="match status" value="1"/>
</dbReference>
<dbReference type="InterPro" id="IPR003732">
    <property type="entry name" value="Daa-tRNA_deacyls_DTD"/>
</dbReference>
<dbReference type="InterPro" id="IPR023509">
    <property type="entry name" value="DTD-like_sf"/>
</dbReference>
<dbReference type="NCBIfam" id="TIGR00256">
    <property type="entry name" value="D-aminoacyl-tRNA deacylase"/>
    <property type="match status" value="1"/>
</dbReference>
<dbReference type="PANTHER" id="PTHR10472:SF5">
    <property type="entry name" value="D-AMINOACYL-TRNA DEACYLASE 1"/>
    <property type="match status" value="1"/>
</dbReference>
<dbReference type="PANTHER" id="PTHR10472">
    <property type="entry name" value="D-TYROSYL-TRNA TYR DEACYLASE"/>
    <property type="match status" value="1"/>
</dbReference>
<dbReference type="Pfam" id="PF02580">
    <property type="entry name" value="Tyr_Deacylase"/>
    <property type="match status" value="1"/>
</dbReference>
<dbReference type="SUPFAM" id="SSF69500">
    <property type="entry name" value="DTD-like"/>
    <property type="match status" value="1"/>
</dbReference>
<gene>
    <name evidence="1" type="primary">dtd</name>
    <name type="ordered locus">SaurJH1_1723</name>
</gene>
<reference key="1">
    <citation type="submission" date="2007-06" db="EMBL/GenBank/DDBJ databases">
        <title>Complete sequence of chromosome of Staphylococcus aureus subsp. aureus JH1.</title>
        <authorList>
            <consortium name="US DOE Joint Genome Institute"/>
            <person name="Copeland A."/>
            <person name="Lucas S."/>
            <person name="Lapidus A."/>
            <person name="Barry K."/>
            <person name="Detter J.C."/>
            <person name="Glavina del Rio T."/>
            <person name="Hammon N."/>
            <person name="Israni S."/>
            <person name="Dalin E."/>
            <person name="Tice H."/>
            <person name="Pitluck S."/>
            <person name="Chain P."/>
            <person name="Malfatti S."/>
            <person name="Shin M."/>
            <person name="Vergez L."/>
            <person name="Schmutz J."/>
            <person name="Larimer F."/>
            <person name="Land M."/>
            <person name="Hauser L."/>
            <person name="Kyrpides N."/>
            <person name="Ivanova N."/>
            <person name="Tomasz A."/>
            <person name="Richardson P."/>
        </authorList>
    </citation>
    <scope>NUCLEOTIDE SEQUENCE [LARGE SCALE GENOMIC DNA]</scope>
    <source>
        <strain>JH1</strain>
    </source>
</reference>
<accession>A6U2A1</accession>
<name>DTD_STAA2</name>
<keyword id="KW-0963">Cytoplasm</keyword>
<keyword id="KW-0378">Hydrolase</keyword>
<keyword id="KW-0694">RNA-binding</keyword>
<keyword id="KW-0820">tRNA-binding</keyword>
<evidence type="ECO:0000255" key="1">
    <source>
        <dbReference type="HAMAP-Rule" id="MF_00518"/>
    </source>
</evidence>
<feature type="chain" id="PRO_1000081670" description="D-aminoacyl-tRNA deacylase">
    <location>
        <begin position="1"/>
        <end position="150"/>
    </location>
</feature>
<feature type="short sequence motif" description="Gly-cisPro motif, important for rejection of L-amino acids" evidence="1">
    <location>
        <begin position="136"/>
        <end position="137"/>
    </location>
</feature>